<protein>
    <recommendedName>
        <fullName evidence="1">Shikimate dehydrogenase (NADP(+))</fullName>
        <shortName evidence="1">SDH</shortName>
        <ecNumber evidence="1">1.1.1.25</ecNumber>
    </recommendedName>
</protein>
<dbReference type="EC" id="1.1.1.25" evidence="1"/>
<dbReference type="EMBL" id="CP001177">
    <property type="protein sequence ID" value="ACJ81825.1"/>
    <property type="molecule type" value="Genomic_DNA"/>
</dbReference>
<dbReference type="SMR" id="B7HPN3"/>
<dbReference type="KEGG" id="bcr:BCAH187_A4467"/>
<dbReference type="HOGENOM" id="CLU_044063_4_1_9"/>
<dbReference type="UniPathway" id="UPA00053">
    <property type="reaction ID" value="UER00087"/>
</dbReference>
<dbReference type="Proteomes" id="UP000002214">
    <property type="component" value="Chromosome"/>
</dbReference>
<dbReference type="GO" id="GO:0005829">
    <property type="term" value="C:cytosol"/>
    <property type="evidence" value="ECO:0007669"/>
    <property type="project" value="TreeGrafter"/>
</dbReference>
<dbReference type="GO" id="GO:0050661">
    <property type="term" value="F:NADP binding"/>
    <property type="evidence" value="ECO:0007669"/>
    <property type="project" value="InterPro"/>
</dbReference>
<dbReference type="GO" id="GO:0004764">
    <property type="term" value="F:shikimate 3-dehydrogenase (NADP+) activity"/>
    <property type="evidence" value="ECO:0007669"/>
    <property type="project" value="UniProtKB-UniRule"/>
</dbReference>
<dbReference type="GO" id="GO:0008652">
    <property type="term" value="P:amino acid biosynthetic process"/>
    <property type="evidence" value="ECO:0007669"/>
    <property type="project" value="UniProtKB-KW"/>
</dbReference>
<dbReference type="GO" id="GO:0009073">
    <property type="term" value="P:aromatic amino acid family biosynthetic process"/>
    <property type="evidence" value="ECO:0007669"/>
    <property type="project" value="UniProtKB-KW"/>
</dbReference>
<dbReference type="GO" id="GO:0009423">
    <property type="term" value="P:chorismate biosynthetic process"/>
    <property type="evidence" value="ECO:0007669"/>
    <property type="project" value="UniProtKB-UniRule"/>
</dbReference>
<dbReference type="GO" id="GO:0019632">
    <property type="term" value="P:shikimate metabolic process"/>
    <property type="evidence" value="ECO:0007669"/>
    <property type="project" value="InterPro"/>
</dbReference>
<dbReference type="CDD" id="cd01065">
    <property type="entry name" value="NAD_bind_Shikimate_DH"/>
    <property type="match status" value="1"/>
</dbReference>
<dbReference type="FunFam" id="3.40.50.10860:FF:000011">
    <property type="entry name" value="Shikimate dehydrogenase (NADP(+))"/>
    <property type="match status" value="1"/>
</dbReference>
<dbReference type="Gene3D" id="3.40.50.10860">
    <property type="entry name" value="Leucine Dehydrogenase, chain A, domain 1"/>
    <property type="match status" value="1"/>
</dbReference>
<dbReference type="Gene3D" id="3.40.50.720">
    <property type="entry name" value="NAD(P)-binding Rossmann-like Domain"/>
    <property type="match status" value="1"/>
</dbReference>
<dbReference type="HAMAP" id="MF_00222">
    <property type="entry name" value="Shikimate_DH_AroE"/>
    <property type="match status" value="1"/>
</dbReference>
<dbReference type="InterPro" id="IPR046346">
    <property type="entry name" value="Aminoacid_DH-like_N_sf"/>
</dbReference>
<dbReference type="InterPro" id="IPR036291">
    <property type="entry name" value="NAD(P)-bd_dom_sf"/>
</dbReference>
<dbReference type="InterPro" id="IPR041121">
    <property type="entry name" value="SDH_C"/>
</dbReference>
<dbReference type="InterPro" id="IPR011342">
    <property type="entry name" value="Shikimate_DH"/>
</dbReference>
<dbReference type="InterPro" id="IPR013708">
    <property type="entry name" value="Shikimate_DH-bd_N"/>
</dbReference>
<dbReference type="InterPro" id="IPR022893">
    <property type="entry name" value="Shikimate_DH_fam"/>
</dbReference>
<dbReference type="InterPro" id="IPR006151">
    <property type="entry name" value="Shikm_DH/Glu-tRNA_Rdtase"/>
</dbReference>
<dbReference type="NCBIfam" id="TIGR00507">
    <property type="entry name" value="aroE"/>
    <property type="match status" value="1"/>
</dbReference>
<dbReference type="NCBIfam" id="NF001319">
    <property type="entry name" value="PRK00258.3-3"/>
    <property type="match status" value="1"/>
</dbReference>
<dbReference type="PANTHER" id="PTHR21089:SF1">
    <property type="entry name" value="BIFUNCTIONAL 3-DEHYDROQUINATE DEHYDRATASE_SHIKIMATE DEHYDROGENASE, CHLOROPLASTIC"/>
    <property type="match status" value="1"/>
</dbReference>
<dbReference type="PANTHER" id="PTHR21089">
    <property type="entry name" value="SHIKIMATE DEHYDROGENASE"/>
    <property type="match status" value="1"/>
</dbReference>
<dbReference type="Pfam" id="PF18317">
    <property type="entry name" value="SDH_C"/>
    <property type="match status" value="1"/>
</dbReference>
<dbReference type="Pfam" id="PF01488">
    <property type="entry name" value="Shikimate_DH"/>
    <property type="match status" value="1"/>
</dbReference>
<dbReference type="Pfam" id="PF08501">
    <property type="entry name" value="Shikimate_dh_N"/>
    <property type="match status" value="1"/>
</dbReference>
<dbReference type="SUPFAM" id="SSF53223">
    <property type="entry name" value="Aminoacid dehydrogenase-like, N-terminal domain"/>
    <property type="match status" value="1"/>
</dbReference>
<dbReference type="SUPFAM" id="SSF51735">
    <property type="entry name" value="NAD(P)-binding Rossmann-fold domains"/>
    <property type="match status" value="1"/>
</dbReference>
<comment type="function">
    <text evidence="1">Involved in the biosynthesis of the chorismate, which leads to the biosynthesis of aromatic amino acids. Catalyzes the reversible NADPH linked reduction of 3-dehydroshikimate (DHSA) to yield shikimate (SA).</text>
</comment>
<comment type="catalytic activity">
    <reaction evidence="1">
        <text>shikimate + NADP(+) = 3-dehydroshikimate + NADPH + H(+)</text>
        <dbReference type="Rhea" id="RHEA:17737"/>
        <dbReference type="ChEBI" id="CHEBI:15378"/>
        <dbReference type="ChEBI" id="CHEBI:16630"/>
        <dbReference type="ChEBI" id="CHEBI:36208"/>
        <dbReference type="ChEBI" id="CHEBI:57783"/>
        <dbReference type="ChEBI" id="CHEBI:58349"/>
        <dbReference type="EC" id="1.1.1.25"/>
    </reaction>
</comment>
<comment type="pathway">
    <text evidence="1">Metabolic intermediate biosynthesis; chorismate biosynthesis; chorismate from D-erythrose 4-phosphate and phosphoenolpyruvate: step 4/7.</text>
</comment>
<comment type="subunit">
    <text evidence="1">Homodimer.</text>
</comment>
<comment type="similarity">
    <text evidence="1">Belongs to the shikimate dehydrogenase family.</text>
</comment>
<accession>B7HPN3</accession>
<proteinExistence type="inferred from homology"/>
<name>AROE_BACC7</name>
<reference key="1">
    <citation type="submission" date="2008-10" db="EMBL/GenBank/DDBJ databases">
        <title>Genome sequence of Bacillus cereus AH187.</title>
        <authorList>
            <person name="Dodson R.J."/>
            <person name="Durkin A.S."/>
            <person name="Rosovitz M.J."/>
            <person name="Rasko D.A."/>
            <person name="Kolsto A.B."/>
            <person name="Okstad O.A."/>
            <person name="Ravel J."/>
            <person name="Sutton G."/>
        </authorList>
    </citation>
    <scope>NUCLEOTIDE SEQUENCE [LARGE SCALE GENOMIC DNA]</scope>
    <source>
        <strain>AH187</strain>
    </source>
</reference>
<gene>
    <name evidence="1" type="primary">aroE</name>
    <name type="ordered locus">BCAH187_A4467</name>
</gene>
<organism>
    <name type="scientific">Bacillus cereus (strain AH187)</name>
    <dbReference type="NCBI Taxonomy" id="405534"/>
    <lineage>
        <taxon>Bacteria</taxon>
        <taxon>Bacillati</taxon>
        <taxon>Bacillota</taxon>
        <taxon>Bacilli</taxon>
        <taxon>Bacillales</taxon>
        <taxon>Bacillaceae</taxon>
        <taxon>Bacillus</taxon>
        <taxon>Bacillus cereus group</taxon>
    </lineage>
</organism>
<sequence length="277" mass="30327">MKQLYGVIGNPIGHSLSPVMHNDAFEHLNMDAHYHAFLVKEEVLGEAVRGLKALGISGFNVTTPHKVAIMDYLDEIDPLAKQIGAVNTVVHKDGKLIGYNTDGIGFVKALQSISSEPLQEKRILLLGAGGASRAIYFSLADVGVKEIDVANRTVDKAKELITACTATVHSVALSLEEATEEQENYDIIIQTTTIGMHPRVEHTPLQISSLKKGTIVSDIIYNPFETKILCEAKEQGAMIQNGIDMFVYQGALAFEMWTGRTPNIERMKQLVIRKLGG</sequence>
<feature type="chain" id="PRO_1000118871" description="Shikimate dehydrogenase (NADP(+))">
    <location>
        <begin position="1"/>
        <end position="277"/>
    </location>
</feature>
<feature type="active site" description="Proton acceptor" evidence="1">
    <location>
        <position position="66"/>
    </location>
</feature>
<feature type="binding site" evidence="1">
    <location>
        <begin position="15"/>
        <end position="17"/>
    </location>
    <ligand>
        <name>shikimate</name>
        <dbReference type="ChEBI" id="CHEBI:36208"/>
    </ligand>
</feature>
<feature type="binding site" evidence="1">
    <location>
        <position position="62"/>
    </location>
    <ligand>
        <name>shikimate</name>
        <dbReference type="ChEBI" id="CHEBI:36208"/>
    </ligand>
</feature>
<feature type="binding site" evidence="1">
    <location>
        <position position="87"/>
    </location>
    <ligand>
        <name>shikimate</name>
        <dbReference type="ChEBI" id="CHEBI:36208"/>
    </ligand>
</feature>
<feature type="binding site" evidence="1">
    <location>
        <position position="102"/>
    </location>
    <ligand>
        <name>shikimate</name>
        <dbReference type="ChEBI" id="CHEBI:36208"/>
    </ligand>
</feature>
<feature type="binding site" evidence="1">
    <location>
        <begin position="127"/>
        <end position="131"/>
    </location>
    <ligand>
        <name>NADP(+)</name>
        <dbReference type="ChEBI" id="CHEBI:58349"/>
    </ligand>
</feature>
<feature type="binding site" evidence="1">
    <location>
        <begin position="151"/>
        <end position="156"/>
    </location>
    <ligand>
        <name>NADP(+)</name>
        <dbReference type="ChEBI" id="CHEBI:58349"/>
    </ligand>
</feature>
<feature type="binding site" evidence="1">
    <location>
        <position position="219"/>
    </location>
    <ligand>
        <name>NADP(+)</name>
        <dbReference type="ChEBI" id="CHEBI:58349"/>
    </ligand>
</feature>
<feature type="binding site" evidence="1">
    <location>
        <position position="221"/>
    </location>
    <ligand>
        <name>shikimate</name>
        <dbReference type="ChEBI" id="CHEBI:36208"/>
    </ligand>
</feature>
<feature type="binding site" evidence="1">
    <location>
        <position position="242"/>
    </location>
    <ligand>
        <name>NADP(+)</name>
        <dbReference type="ChEBI" id="CHEBI:58349"/>
    </ligand>
</feature>
<keyword id="KW-0028">Amino-acid biosynthesis</keyword>
<keyword id="KW-0057">Aromatic amino acid biosynthesis</keyword>
<keyword id="KW-0521">NADP</keyword>
<keyword id="KW-0560">Oxidoreductase</keyword>
<evidence type="ECO:0000255" key="1">
    <source>
        <dbReference type="HAMAP-Rule" id="MF_00222"/>
    </source>
</evidence>